<evidence type="ECO:0000255" key="1">
    <source>
        <dbReference type="HAMAP-Rule" id="MF_00019"/>
    </source>
</evidence>
<keyword id="KW-0963">Cytoplasm</keyword>
<keyword id="KW-0444">Lipid biosynthesis</keyword>
<keyword id="KW-0443">Lipid metabolism</keyword>
<keyword id="KW-0594">Phospholipid biosynthesis</keyword>
<keyword id="KW-1208">Phospholipid metabolism</keyword>
<keyword id="KW-1185">Reference proteome</keyword>
<keyword id="KW-0808">Transferase</keyword>
<protein>
    <recommendedName>
        <fullName evidence="1">Phosphate acyltransferase</fullName>
        <ecNumber evidence="1">2.3.1.274</ecNumber>
    </recommendedName>
    <alternativeName>
        <fullName evidence="1">Acyl-ACP phosphotransacylase</fullName>
    </alternativeName>
    <alternativeName>
        <fullName evidence="1">Acyl-[acyl-carrier-protein]--phosphate acyltransferase</fullName>
    </alternativeName>
    <alternativeName>
        <fullName evidence="1">Phosphate-acyl-ACP acyltransferase</fullName>
    </alternativeName>
</protein>
<accession>A1VRU8</accession>
<feature type="chain" id="PRO_1000001799" description="Phosphate acyltransferase">
    <location>
        <begin position="1"/>
        <end position="370"/>
    </location>
</feature>
<sequence length="370" mass="39100">MIRIAVDAMGGDIGPDVTLAASLAFLQAHPDAELLLVGQPEVLAAHSLHAQLVAHARCEIVAASEVVTMDDSIEIALRRKKNSSMRVAINQVKEGRAQVAVSGGNTGALMAIARYVLKTLEGIDRPAIASQLPNARGKATTMLDLGANVDCTEEHLLQFAVMGSALVAAIAEIPSPTVGLLNIGEEAIKGGDMIKKAGRLLRAASDSGDINFYGNVEGNDIFKGTTDLVVCDGFVGNVALKSSEGLAHMIGDYIKAEFSRNLLTKMAALVAYPVLSAFKKRFDHRRYNGAALLGLRGLVFKSHGSADVFAFEQALSRAYDAARNNLLERVRERIAHAAPLLVAARAALPAEEALAAPFMSVESTVSTPAH</sequence>
<reference key="1">
    <citation type="journal article" date="2009" name="Environ. Microbiol.">
        <title>The genome of Polaromonas naphthalenivorans strain CJ2, isolated from coal tar-contaminated sediment, reveals physiological and metabolic versatility and evolution through extensive horizontal gene transfer.</title>
        <authorList>
            <person name="Yagi J.M."/>
            <person name="Sims D."/>
            <person name="Brettin T."/>
            <person name="Bruce D."/>
            <person name="Madsen E.L."/>
        </authorList>
    </citation>
    <scope>NUCLEOTIDE SEQUENCE [LARGE SCALE GENOMIC DNA]</scope>
    <source>
        <strain>CJ2</strain>
    </source>
</reference>
<name>PLSX_POLNA</name>
<gene>
    <name evidence="1" type="primary">plsX</name>
    <name type="ordered locus">Pnap_3077</name>
</gene>
<organism>
    <name type="scientific">Polaromonas naphthalenivorans (strain CJ2)</name>
    <dbReference type="NCBI Taxonomy" id="365044"/>
    <lineage>
        <taxon>Bacteria</taxon>
        <taxon>Pseudomonadati</taxon>
        <taxon>Pseudomonadota</taxon>
        <taxon>Betaproteobacteria</taxon>
        <taxon>Burkholderiales</taxon>
        <taxon>Comamonadaceae</taxon>
        <taxon>Polaromonas</taxon>
    </lineage>
</organism>
<comment type="function">
    <text evidence="1">Catalyzes the reversible formation of acyl-phosphate (acyl-PO(4)) from acyl-[acyl-carrier-protein] (acyl-ACP). This enzyme utilizes acyl-ACP as fatty acyl donor, but not acyl-CoA.</text>
</comment>
<comment type="catalytic activity">
    <reaction evidence="1">
        <text>a fatty acyl-[ACP] + phosphate = an acyl phosphate + holo-[ACP]</text>
        <dbReference type="Rhea" id="RHEA:42292"/>
        <dbReference type="Rhea" id="RHEA-COMP:9685"/>
        <dbReference type="Rhea" id="RHEA-COMP:14125"/>
        <dbReference type="ChEBI" id="CHEBI:43474"/>
        <dbReference type="ChEBI" id="CHEBI:59918"/>
        <dbReference type="ChEBI" id="CHEBI:64479"/>
        <dbReference type="ChEBI" id="CHEBI:138651"/>
        <dbReference type="EC" id="2.3.1.274"/>
    </reaction>
</comment>
<comment type="pathway">
    <text evidence="1">Lipid metabolism; phospholipid metabolism.</text>
</comment>
<comment type="subunit">
    <text evidence="1">Homodimer. Probably interacts with PlsY.</text>
</comment>
<comment type="subcellular location">
    <subcellularLocation>
        <location evidence="1">Cytoplasm</location>
    </subcellularLocation>
    <text evidence="1">Associated with the membrane possibly through PlsY.</text>
</comment>
<comment type="similarity">
    <text evidence="1">Belongs to the PlsX family.</text>
</comment>
<dbReference type="EC" id="2.3.1.274" evidence="1"/>
<dbReference type="EMBL" id="CP000529">
    <property type="protein sequence ID" value="ABM38376.1"/>
    <property type="molecule type" value="Genomic_DNA"/>
</dbReference>
<dbReference type="RefSeq" id="WP_011802448.1">
    <property type="nucleotide sequence ID" value="NC_008781.1"/>
</dbReference>
<dbReference type="SMR" id="A1VRU8"/>
<dbReference type="STRING" id="365044.Pnap_3077"/>
<dbReference type="KEGG" id="pna:Pnap_3077"/>
<dbReference type="eggNOG" id="COG0416">
    <property type="taxonomic scope" value="Bacteria"/>
</dbReference>
<dbReference type="HOGENOM" id="CLU_039379_1_0_4"/>
<dbReference type="OrthoDB" id="9806408at2"/>
<dbReference type="UniPathway" id="UPA00085"/>
<dbReference type="Proteomes" id="UP000000644">
    <property type="component" value="Chromosome"/>
</dbReference>
<dbReference type="GO" id="GO:0005737">
    <property type="term" value="C:cytoplasm"/>
    <property type="evidence" value="ECO:0007669"/>
    <property type="project" value="UniProtKB-SubCell"/>
</dbReference>
<dbReference type="GO" id="GO:0043811">
    <property type="term" value="F:phosphate:acyl-[acyl carrier protein] acyltransferase activity"/>
    <property type="evidence" value="ECO:0007669"/>
    <property type="project" value="UniProtKB-UniRule"/>
</dbReference>
<dbReference type="GO" id="GO:0006633">
    <property type="term" value="P:fatty acid biosynthetic process"/>
    <property type="evidence" value="ECO:0007669"/>
    <property type="project" value="UniProtKB-UniRule"/>
</dbReference>
<dbReference type="GO" id="GO:0008654">
    <property type="term" value="P:phospholipid biosynthetic process"/>
    <property type="evidence" value="ECO:0007669"/>
    <property type="project" value="UniProtKB-KW"/>
</dbReference>
<dbReference type="Gene3D" id="3.40.718.10">
    <property type="entry name" value="Isopropylmalate Dehydrogenase"/>
    <property type="match status" value="1"/>
</dbReference>
<dbReference type="HAMAP" id="MF_00019">
    <property type="entry name" value="PlsX"/>
    <property type="match status" value="1"/>
</dbReference>
<dbReference type="InterPro" id="IPR003664">
    <property type="entry name" value="FA_synthesis"/>
</dbReference>
<dbReference type="InterPro" id="IPR012281">
    <property type="entry name" value="Phospholipid_synth_PlsX-like"/>
</dbReference>
<dbReference type="NCBIfam" id="TIGR00182">
    <property type="entry name" value="plsX"/>
    <property type="match status" value="1"/>
</dbReference>
<dbReference type="PANTHER" id="PTHR30100">
    <property type="entry name" value="FATTY ACID/PHOSPHOLIPID SYNTHESIS PROTEIN PLSX"/>
    <property type="match status" value="1"/>
</dbReference>
<dbReference type="PANTHER" id="PTHR30100:SF1">
    <property type="entry name" value="PHOSPHATE ACYLTRANSFERASE"/>
    <property type="match status" value="1"/>
</dbReference>
<dbReference type="Pfam" id="PF02504">
    <property type="entry name" value="FA_synthesis"/>
    <property type="match status" value="1"/>
</dbReference>
<dbReference type="PIRSF" id="PIRSF002465">
    <property type="entry name" value="Phsphlp_syn_PlsX"/>
    <property type="match status" value="1"/>
</dbReference>
<dbReference type="SUPFAM" id="SSF53659">
    <property type="entry name" value="Isocitrate/Isopropylmalate dehydrogenase-like"/>
    <property type="match status" value="1"/>
</dbReference>
<proteinExistence type="inferred from homology"/>